<reference key="1">
    <citation type="journal article" date="2002" name="Nature">
        <title>The genome sequence of Schizosaccharomyces pombe.</title>
        <authorList>
            <person name="Wood V."/>
            <person name="Gwilliam R."/>
            <person name="Rajandream M.A."/>
            <person name="Lyne M.H."/>
            <person name="Lyne R."/>
            <person name="Stewart A."/>
            <person name="Sgouros J.G."/>
            <person name="Peat N."/>
            <person name="Hayles J."/>
            <person name="Baker S.G."/>
            <person name="Basham D."/>
            <person name="Bowman S."/>
            <person name="Brooks K."/>
            <person name="Brown D."/>
            <person name="Brown S."/>
            <person name="Chillingworth T."/>
            <person name="Churcher C.M."/>
            <person name="Collins M."/>
            <person name="Connor R."/>
            <person name="Cronin A."/>
            <person name="Davis P."/>
            <person name="Feltwell T."/>
            <person name="Fraser A."/>
            <person name="Gentles S."/>
            <person name="Goble A."/>
            <person name="Hamlin N."/>
            <person name="Harris D.E."/>
            <person name="Hidalgo J."/>
            <person name="Hodgson G."/>
            <person name="Holroyd S."/>
            <person name="Hornsby T."/>
            <person name="Howarth S."/>
            <person name="Huckle E.J."/>
            <person name="Hunt S."/>
            <person name="Jagels K."/>
            <person name="James K.D."/>
            <person name="Jones L."/>
            <person name="Jones M."/>
            <person name="Leather S."/>
            <person name="McDonald S."/>
            <person name="McLean J."/>
            <person name="Mooney P."/>
            <person name="Moule S."/>
            <person name="Mungall K.L."/>
            <person name="Murphy L.D."/>
            <person name="Niblett D."/>
            <person name="Odell C."/>
            <person name="Oliver K."/>
            <person name="O'Neil S."/>
            <person name="Pearson D."/>
            <person name="Quail M.A."/>
            <person name="Rabbinowitsch E."/>
            <person name="Rutherford K.M."/>
            <person name="Rutter S."/>
            <person name="Saunders D."/>
            <person name="Seeger K."/>
            <person name="Sharp S."/>
            <person name="Skelton J."/>
            <person name="Simmonds M.N."/>
            <person name="Squares R."/>
            <person name="Squares S."/>
            <person name="Stevens K."/>
            <person name="Taylor K."/>
            <person name="Taylor R.G."/>
            <person name="Tivey A."/>
            <person name="Walsh S.V."/>
            <person name="Warren T."/>
            <person name="Whitehead S."/>
            <person name="Woodward J.R."/>
            <person name="Volckaert G."/>
            <person name="Aert R."/>
            <person name="Robben J."/>
            <person name="Grymonprez B."/>
            <person name="Weltjens I."/>
            <person name="Vanstreels E."/>
            <person name="Rieger M."/>
            <person name="Schaefer M."/>
            <person name="Mueller-Auer S."/>
            <person name="Gabel C."/>
            <person name="Fuchs M."/>
            <person name="Duesterhoeft A."/>
            <person name="Fritzc C."/>
            <person name="Holzer E."/>
            <person name="Moestl D."/>
            <person name="Hilbert H."/>
            <person name="Borzym K."/>
            <person name="Langer I."/>
            <person name="Beck A."/>
            <person name="Lehrach H."/>
            <person name="Reinhardt R."/>
            <person name="Pohl T.M."/>
            <person name="Eger P."/>
            <person name="Zimmermann W."/>
            <person name="Wedler H."/>
            <person name="Wambutt R."/>
            <person name="Purnelle B."/>
            <person name="Goffeau A."/>
            <person name="Cadieu E."/>
            <person name="Dreano S."/>
            <person name="Gloux S."/>
            <person name="Lelaure V."/>
            <person name="Mottier S."/>
            <person name="Galibert F."/>
            <person name="Aves S.J."/>
            <person name="Xiang Z."/>
            <person name="Hunt C."/>
            <person name="Moore K."/>
            <person name="Hurst S.M."/>
            <person name="Lucas M."/>
            <person name="Rochet M."/>
            <person name="Gaillardin C."/>
            <person name="Tallada V.A."/>
            <person name="Garzon A."/>
            <person name="Thode G."/>
            <person name="Daga R.R."/>
            <person name="Cruzado L."/>
            <person name="Jimenez J."/>
            <person name="Sanchez M."/>
            <person name="del Rey F."/>
            <person name="Benito J."/>
            <person name="Dominguez A."/>
            <person name="Revuelta J.L."/>
            <person name="Moreno S."/>
            <person name="Armstrong J."/>
            <person name="Forsburg S.L."/>
            <person name="Cerutti L."/>
            <person name="Lowe T."/>
            <person name="McCombie W.R."/>
            <person name="Paulsen I."/>
            <person name="Potashkin J."/>
            <person name="Shpakovski G.V."/>
            <person name="Ussery D."/>
            <person name="Barrell B.G."/>
            <person name="Nurse P."/>
        </authorList>
    </citation>
    <scope>NUCLEOTIDE SEQUENCE [LARGE SCALE GENOMIC DNA]</scope>
    <source>
        <strain>972 / ATCC 24843</strain>
    </source>
</reference>
<reference key="2">
    <citation type="journal article" date="2006" name="Nat. Biotechnol.">
        <title>ORFeome cloning and global analysis of protein localization in the fission yeast Schizosaccharomyces pombe.</title>
        <authorList>
            <person name="Matsuyama A."/>
            <person name="Arai R."/>
            <person name="Yashiroda Y."/>
            <person name="Shirai A."/>
            <person name="Kamata A."/>
            <person name="Sekido S."/>
            <person name="Kobayashi Y."/>
            <person name="Hashimoto A."/>
            <person name="Hamamoto M."/>
            <person name="Hiraoka Y."/>
            <person name="Horinouchi S."/>
            <person name="Yoshida M."/>
        </authorList>
    </citation>
    <scope>SUBCELLULAR LOCATION [LARGE SCALE ANALYSIS]</scope>
</reference>
<reference key="3">
    <citation type="journal article" date="2006" name="Yeast">
        <title>Spsgt1, a new essential gene of Schizosaccharomyces pombe, is involved in carbohydrate metabolism.</title>
        <authorList>
            <person name="Kainou T."/>
            <person name="Shinzato T."/>
            <person name="Sasaki K."/>
            <person name="Mitsui Y."/>
            <person name="Giga-Hama Y."/>
            <person name="Kumagai H."/>
            <person name="Uemura H."/>
        </authorList>
    </citation>
    <scope>FUNCTION</scope>
    <scope>SUBCELLULAR LOCATION</scope>
</reference>
<keyword id="KW-0963">Cytoplasm</keyword>
<keyword id="KW-0539">Nucleus</keyword>
<keyword id="KW-1185">Reference proteome</keyword>
<keyword id="KW-0804">Transcription</keyword>
<keyword id="KW-0805">Transcription regulation</keyword>
<dbReference type="EMBL" id="CU329670">
    <property type="protein sequence ID" value="CAB65610.1"/>
    <property type="molecule type" value="Genomic_DNA"/>
</dbReference>
<dbReference type="RefSeq" id="NP_593497.1">
    <property type="nucleotide sequence ID" value="NM_001018931.2"/>
</dbReference>
<dbReference type="BioGRID" id="279694">
    <property type="interactions" value="1"/>
</dbReference>
<dbReference type="FunCoup" id="Q9US49">
    <property type="interactions" value="894"/>
</dbReference>
<dbReference type="STRING" id="284812.Q9US49"/>
<dbReference type="iPTMnet" id="Q9US49"/>
<dbReference type="PaxDb" id="4896-SPAC1002.10c.1"/>
<dbReference type="EnsemblFungi" id="SPAC1002.10c.1">
    <property type="protein sequence ID" value="SPAC1002.10c.1:pep"/>
    <property type="gene ID" value="SPAC1002.10c"/>
</dbReference>
<dbReference type="GeneID" id="2543266"/>
<dbReference type="KEGG" id="spo:2543266"/>
<dbReference type="PomBase" id="SPAC1002.10c">
    <property type="gene designation" value="sgt1"/>
</dbReference>
<dbReference type="VEuPathDB" id="FungiDB:SPAC1002.10c"/>
<dbReference type="eggNOG" id="KOG2406">
    <property type="taxonomic scope" value="Eukaryota"/>
</dbReference>
<dbReference type="HOGENOM" id="CLU_006241_2_0_1"/>
<dbReference type="InParanoid" id="Q9US49"/>
<dbReference type="OMA" id="DYRVWIH"/>
<dbReference type="PhylomeDB" id="Q9US49"/>
<dbReference type="PRO" id="PR:Q9US49"/>
<dbReference type="Proteomes" id="UP000002485">
    <property type="component" value="Chromosome I"/>
</dbReference>
<dbReference type="GO" id="GO:0005829">
    <property type="term" value="C:cytosol"/>
    <property type="evidence" value="ECO:0007005"/>
    <property type="project" value="PomBase"/>
</dbReference>
<dbReference type="GO" id="GO:0005634">
    <property type="term" value="C:nucleus"/>
    <property type="evidence" value="ECO:0000314"/>
    <property type="project" value="PomBase"/>
</dbReference>
<dbReference type="GO" id="GO:0070990">
    <property type="term" value="F:snRNP binding"/>
    <property type="evidence" value="ECO:0000250"/>
    <property type="project" value="PomBase"/>
</dbReference>
<dbReference type="GO" id="GO:0045292">
    <property type="term" value="P:mRNA cis splicing, via spliceosome"/>
    <property type="evidence" value="ECO:0000250"/>
    <property type="project" value="PomBase"/>
</dbReference>
<dbReference type="InterPro" id="IPR010770">
    <property type="entry name" value="Ecd"/>
</dbReference>
<dbReference type="PANTHER" id="PTHR13060:SF0">
    <property type="entry name" value="PROTEIN ECDYSONELESS HOMOLOG"/>
    <property type="match status" value="1"/>
</dbReference>
<dbReference type="PANTHER" id="PTHR13060">
    <property type="entry name" value="SGT1 PROTEIN HSGT1 SUPPRESSOR OF GCR2"/>
    <property type="match status" value="1"/>
</dbReference>
<dbReference type="Pfam" id="PF07093">
    <property type="entry name" value="SGT1"/>
    <property type="match status" value="1"/>
</dbReference>
<protein>
    <recommendedName>
        <fullName evidence="2">Protein ecdysoneless homolog</fullName>
    </recommendedName>
    <alternativeName>
        <fullName evidence="1">Suppressor of GCR two</fullName>
        <shortName evidence="5">sgt1</shortName>
    </alternativeName>
</protein>
<feature type="chain" id="PRO_0000220848" description="Protein ecdysoneless homolog">
    <location>
        <begin position="1"/>
        <end position="590"/>
    </location>
</feature>
<feature type="region of interest" description="Disordered" evidence="3">
    <location>
        <begin position="445"/>
        <end position="464"/>
    </location>
</feature>
<feature type="compositionally biased region" description="Acidic residues" evidence="3">
    <location>
        <begin position="455"/>
        <end position="464"/>
    </location>
</feature>
<evidence type="ECO:0000250" key="1">
    <source>
        <dbReference type="UniProtKB" id="O95905"/>
    </source>
</evidence>
<evidence type="ECO:0000250" key="2">
    <source>
        <dbReference type="UniProtKB" id="Q9W032"/>
    </source>
</evidence>
<evidence type="ECO:0000256" key="3">
    <source>
        <dbReference type="SAM" id="MobiDB-lite"/>
    </source>
</evidence>
<evidence type="ECO:0000269" key="4">
    <source>
    </source>
</evidence>
<evidence type="ECO:0000303" key="5">
    <source>
    </source>
</evidence>
<evidence type="ECO:0000305" key="6"/>
<evidence type="ECO:0000312" key="7">
    <source>
        <dbReference type="PomBase" id="SPAC1002.10c"/>
    </source>
</evidence>
<accession>Q9US49</accession>
<sequence>MSNLGNNITERIESDCISQNECRIDVYFSEKEKESTEASINMFLAELERLQLEYGKEHIWQNEELNLQRVEYQGKDCILGITNFGDCIDDEWYIVWLLREASKAVKSAFVRIIDEDGEFLLIEAALSLPKWIDEDNSDYRVWIHNGEVIILRPEDEFLKKMNRCPPLTREQAIFQISSGSNLYTSREVNDSISQRLKKFPKAANVKLRAICTVPRKIVHVLQKNKNLISSAVNAFYYRDPIDENYCDRMSKFNQNDLVTTTITFTPLLYAQLYQQRCKTFRPFHLPSDVHSLDYERAILGMKLSCGFEILYNSKENVEKRTEIDEYLQIQPLPTDEDIKKIPLIEDDTSFMNVNPDELEELLEKKLNSFCDDFGDDERSGFDNTDHDNTLVGEEEMVPGNHGGKSINEEITKNKQKQNFNESDLKNMASRIETFINDEASNNHREDFYGVKNSDTDTDSDSLADSDDEIFLNRNQGIDEVEFDETKFYDLLKGKDGKYQNQDVDEFSSGNEDEMDIPGDANMEEYMRAMDEELYGGLRGRDEGLEGIDDKDIDLNLMKNIIEGIEANPDLYGGPISTLLNSLKIQIPREK</sequence>
<organism>
    <name type="scientific">Schizosaccharomyces pombe (strain 972 / ATCC 24843)</name>
    <name type="common">Fission yeast</name>
    <dbReference type="NCBI Taxonomy" id="284812"/>
    <lineage>
        <taxon>Eukaryota</taxon>
        <taxon>Fungi</taxon>
        <taxon>Dikarya</taxon>
        <taxon>Ascomycota</taxon>
        <taxon>Taphrinomycotina</taxon>
        <taxon>Schizosaccharomycetes</taxon>
        <taxon>Schizosaccharomycetales</taxon>
        <taxon>Schizosaccharomycetaceae</taxon>
        <taxon>Schizosaccharomyces</taxon>
    </lineage>
</organism>
<proteinExistence type="inferred from homology"/>
<comment type="function">
    <text evidence="4">Involved in the regulation of carbohydrate metabolism. May act as a transcription factor.</text>
</comment>
<comment type="subcellular location">
    <subcellularLocation>
        <location>Cytoplasm</location>
    </subcellularLocation>
    <subcellularLocation>
        <location>Nucleus</location>
    </subcellularLocation>
</comment>
<comment type="similarity">
    <text evidence="6">Belongs to the ECD family.</text>
</comment>
<gene>
    <name evidence="7" type="primary">sgt1</name>
    <name type="ORF">SPAC1002.10c</name>
</gene>
<name>ECD_SCHPO</name>